<protein>
    <recommendedName>
        <fullName evidence="3">Cilia- and flagella-associated protein 73</fullName>
    </recommendedName>
    <alternativeName>
        <fullName evidence="4">Coiled-coil domain-containing protein 42B</fullName>
    </alternativeName>
</protein>
<dbReference type="EMBL" id="AC089999">
    <property type="status" value="NOT_ANNOTATED_CDS"/>
    <property type="molecule type" value="Genomic_DNA"/>
</dbReference>
<dbReference type="EMBL" id="EG327787">
    <property type="status" value="NOT_ANNOTATED_CDS"/>
    <property type="molecule type" value="mRNA"/>
</dbReference>
<dbReference type="CCDS" id="CCDS44983.1"/>
<dbReference type="RefSeq" id="NP_001138344.1">
    <property type="nucleotide sequence ID" value="NM_001144872.3"/>
</dbReference>
<dbReference type="PDB" id="8J07">
    <property type="method" value="EM"/>
    <property type="resolution" value="4.10 A"/>
    <property type="chains" value="j3=1-308"/>
</dbReference>
<dbReference type="PDBsum" id="8J07"/>
<dbReference type="EMDB" id="EMD-35888"/>
<dbReference type="SMR" id="A6NFT4"/>
<dbReference type="FunCoup" id="A6NFT4">
    <property type="interactions" value="34"/>
</dbReference>
<dbReference type="IntAct" id="A6NFT4">
    <property type="interactions" value="1"/>
</dbReference>
<dbReference type="MINT" id="A6NFT4"/>
<dbReference type="STRING" id="9606.ENSP00000333915"/>
<dbReference type="BioMuta" id="CFAP73"/>
<dbReference type="MassIVE" id="A6NFT4"/>
<dbReference type="PaxDb" id="9606-ENSP00000333915"/>
<dbReference type="PeptideAtlas" id="A6NFT4"/>
<dbReference type="ProteomicsDB" id="1076"/>
<dbReference type="Antibodypedia" id="62409">
    <property type="antibodies" value="23 antibodies from 7 providers"/>
</dbReference>
<dbReference type="DNASU" id="387885"/>
<dbReference type="Ensembl" id="ENST00000335621.11">
    <property type="protein sequence ID" value="ENSP00000333915.6"/>
    <property type="gene ID" value="ENSG00000186710.12"/>
</dbReference>
<dbReference type="GeneID" id="387885"/>
<dbReference type="KEGG" id="hsa:387885"/>
<dbReference type="MANE-Select" id="ENST00000335621.11">
    <property type="protein sequence ID" value="ENSP00000333915.6"/>
    <property type="RefSeq nucleotide sequence ID" value="NM_001144872.3"/>
    <property type="RefSeq protein sequence ID" value="NP_001138344.1"/>
</dbReference>
<dbReference type="UCSC" id="uc010sys.2">
    <property type="organism name" value="human"/>
</dbReference>
<dbReference type="AGR" id="HGNC:37100"/>
<dbReference type="CTD" id="387885"/>
<dbReference type="DisGeNET" id="387885"/>
<dbReference type="GeneCards" id="CFAP73"/>
<dbReference type="HGNC" id="HGNC:37100">
    <property type="gene designation" value="CFAP73"/>
</dbReference>
<dbReference type="HPA" id="ENSG00000186710">
    <property type="expression patterns" value="Tissue enhanced (choroid plexus, fallopian tube)"/>
</dbReference>
<dbReference type="neXtProt" id="NX_A6NFT4"/>
<dbReference type="OpenTargets" id="ENSG00000186710"/>
<dbReference type="VEuPathDB" id="HostDB:ENSG00000186710"/>
<dbReference type="eggNOG" id="ENOG502QRZS">
    <property type="taxonomic scope" value="Eukaryota"/>
</dbReference>
<dbReference type="GeneTree" id="ENSGT00940000153110"/>
<dbReference type="HOGENOM" id="CLU_061472_3_0_1"/>
<dbReference type="InParanoid" id="A6NFT4"/>
<dbReference type="OMA" id="SIEMLYI"/>
<dbReference type="OrthoDB" id="10264298at2759"/>
<dbReference type="PAN-GO" id="A6NFT4">
    <property type="GO annotations" value="0 GO annotations based on evolutionary models"/>
</dbReference>
<dbReference type="PhylomeDB" id="A6NFT4"/>
<dbReference type="TreeFam" id="TF327270"/>
<dbReference type="PathwayCommons" id="A6NFT4"/>
<dbReference type="SignaLink" id="A6NFT4"/>
<dbReference type="BioGRID-ORCS" id="387885">
    <property type="hits" value="7 hits in 1135 CRISPR screens"/>
</dbReference>
<dbReference type="ChiTaRS" id="CFAP73">
    <property type="organism name" value="human"/>
</dbReference>
<dbReference type="GenomeRNAi" id="387885"/>
<dbReference type="Pharos" id="A6NFT4">
    <property type="development level" value="Tdark"/>
</dbReference>
<dbReference type="PRO" id="PR:A6NFT4"/>
<dbReference type="Proteomes" id="UP000005640">
    <property type="component" value="Chromosome 12"/>
</dbReference>
<dbReference type="RNAct" id="A6NFT4">
    <property type="molecule type" value="protein"/>
</dbReference>
<dbReference type="Bgee" id="ENSG00000186710">
    <property type="expression patterns" value="Expressed in right uterine tube and 146 other cell types or tissues"/>
</dbReference>
<dbReference type="ExpressionAtlas" id="A6NFT4">
    <property type="expression patterns" value="baseline and differential"/>
</dbReference>
<dbReference type="GO" id="GO:0097545">
    <property type="term" value="C:axonemal doublet microtubule"/>
    <property type="evidence" value="ECO:0000250"/>
    <property type="project" value="UniProtKB"/>
</dbReference>
<dbReference type="GO" id="GO:0031514">
    <property type="term" value="C:motile cilium"/>
    <property type="evidence" value="ECO:0000250"/>
    <property type="project" value="UniProtKB"/>
</dbReference>
<dbReference type="GO" id="GO:0070840">
    <property type="term" value="F:dynein complex binding"/>
    <property type="evidence" value="ECO:0000250"/>
    <property type="project" value="UniProtKB"/>
</dbReference>
<dbReference type="GO" id="GO:0003341">
    <property type="term" value="P:cilium movement"/>
    <property type="evidence" value="ECO:0000250"/>
    <property type="project" value="UniProtKB"/>
</dbReference>
<dbReference type="GO" id="GO:0036159">
    <property type="term" value="P:inner dynein arm assembly"/>
    <property type="evidence" value="ECO:0000250"/>
    <property type="project" value="UniProtKB"/>
</dbReference>
<dbReference type="InterPro" id="IPR051147">
    <property type="entry name" value="CFAP_domain-containing"/>
</dbReference>
<dbReference type="InterPro" id="IPR025252">
    <property type="entry name" value="DUF4200"/>
</dbReference>
<dbReference type="PANTHER" id="PTHR21683:SF9">
    <property type="entry name" value="CILIA- AND FLAGELLA-ASSOCIATED PROTEIN 73"/>
    <property type="match status" value="1"/>
</dbReference>
<dbReference type="PANTHER" id="PTHR21683">
    <property type="entry name" value="COILED-COIL DOMAIN-CONTAINING PROTEIN 42 LIKE-2-LIKE-RELATED"/>
    <property type="match status" value="1"/>
</dbReference>
<dbReference type="Pfam" id="PF13863">
    <property type="entry name" value="DUF4200"/>
    <property type="match status" value="1"/>
</dbReference>
<keyword id="KW-0002">3D-structure</keyword>
<keyword id="KW-0966">Cell projection</keyword>
<keyword id="KW-0969">Cilium</keyword>
<keyword id="KW-0175">Coiled coil</keyword>
<keyword id="KW-0963">Cytoplasm</keyword>
<keyword id="KW-0206">Cytoskeleton</keyword>
<keyword id="KW-1267">Proteomics identification</keyword>
<keyword id="KW-1185">Reference proteome</keyword>
<feature type="chain" id="PRO_0000343715" description="Cilia- and flagella-associated protein 73">
    <location>
        <begin position="1"/>
        <end position="308"/>
    </location>
</feature>
<feature type="coiled-coil region" evidence="2">
    <location>
        <begin position="34"/>
        <end position="143"/>
    </location>
</feature>
<feature type="coiled-coil region" evidence="2">
    <location>
        <begin position="175"/>
        <end position="233"/>
    </location>
</feature>
<reference key="1">
    <citation type="journal article" date="2006" name="Nature">
        <title>The finished DNA sequence of human chromosome 12.</title>
        <authorList>
            <person name="Scherer S.E."/>
            <person name="Muzny D.M."/>
            <person name="Buhay C.J."/>
            <person name="Chen R."/>
            <person name="Cree A."/>
            <person name="Ding Y."/>
            <person name="Dugan-Rocha S."/>
            <person name="Gill R."/>
            <person name="Gunaratne P."/>
            <person name="Harris R.A."/>
            <person name="Hawes A.C."/>
            <person name="Hernandez J."/>
            <person name="Hodgson A.V."/>
            <person name="Hume J."/>
            <person name="Jackson A."/>
            <person name="Khan Z.M."/>
            <person name="Kovar-Smith C."/>
            <person name="Lewis L.R."/>
            <person name="Lozado R.J."/>
            <person name="Metzker M.L."/>
            <person name="Milosavljevic A."/>
            <person name="Miner G.R."/>
            <person name="Montgomery K.T."/>
            <person name="Morgan M.B."/>
            <person name="Nazareth L.V."/>
            <person name="Scott G."/>
            <person name="Sodergren E."/>
            <person name="Song X.-Z."/>
            <person name="Steffen D."/>
            <person name="Lovering R.C."/>
            <person name="Wheeler D.A."/>
            <person name="Worley K.C."/>
            <person name="Yuan Y."/>
            <person name="Zhang Z."/>
            <person name="Adams C.Q."/>
            <person name="Ansari-Lari M.A."/>
            <person name="Ayele M."/>
            <person name="Brown M.J."/>
            <person name="Chen G."/>
            <person name="Chen Z."/>
            <person name="Clerc-Blankenburg K.P."/>
            <person name="Davis C."/>
            <person name="Delgado O."/>
            <person name="Dinh H.H."/>
            <person name="Draper H."/>
            <person name="Gonzalez-Garay M.L."/>
            <person name="Havlak P."/>
            <person name="Jackson L.R."/>
            <person name="Jacob L.S."/>
            <person name="Kelly S.H."/>
            <person name="Li L."/>
            <person name="Li Z."/>
            <person name="Liu J."/>
            <person name="Liu W."/>
            <person name="Lu J."/>
            <person name="Maheshwari M."/>
            <person name="Nguyen B.-V."/>
            <person name="Okwuonu G.O."/>
            <person name="Pasternak S."/>
            <person name="Perez L.M."/>
            <person name="Plopper F.J.H."/>
            <person name="Santibanez J."/>
            <person name="Shen H."/>
            <person name="Tabor P.E."/>
            <person name="Verduzco D."/>
            <person name="Waldron L."/>
            <person name="Wang Q."/>
            <person name="Williams G.A."/>
            <person name="Zhang J."/>
            <person name="Zhou J."/>
            <person name="Allen C.C."/>
            <person name="Amin A.G."/>
            <person name="Anyalebechi V."/>
            <person name="Bailey M."/>
            <person name="Barbaria J.A."/>
            <person name="Bimage K.E."/>
            <person name="Bryant N.P."/>
            <person name="Burch P.E."/>
            <person name="Burkett C.E."/>
            <person name="Burrell K.L."/>
            <person name="Calderon E."/>
            <person name="Cardenas V."/>
            <person name="Carter K."/>
            <person name="Casias K."/>
            <person name="Cavazos I."/>
            <person name="Cavazos S.R."/>
            <person name="Ceasar H."/>
            <person name="Chacko J."/>
            <person name="Chan S.N."/>
            <person name="Chavez D."/>
            <person name="Christopoulos C."/>
            <person name="Chu J."/>
            <person name="Cockrell R."/>
            <person name="Cox C.D."/>
            <person name="Dang M."/>
            <person name="Dathorne S.R."/>
            <person name="David R."/>
            <person name="Davis C.M."/>
            <person name="Davy-Carroll L."/>
            <person name="Deshazo D.R."/>
            <person name="Donlin J.E."/>
            <person name="D'Souza L."/>
            <person name="Eaves K.A."/>
            <person name="Egan A."/>
            <person name="Emery-Cohen A.J."/>
            <person name="Escotto M."/>
            <person name="Flagg N."/>
            <person name="Forbes L.D."/>
            <person name="Gabisi A.M."/>
            <person name="Garza M."/>
            <person name="Hamilton C."/>
            <person name="Henderson N."/>
            <person name="Hernandez O."/>
            <person name="Hines S."/>
            <person name="Hogues M.E."/>
            <person name="Huang M."/>
            <person name="Idlebird D.G."/>
            <person name="Johnson R."/>
            <person name="Jolivet A."/>
            <person name="Jones S."/>
            <person name="Kagan R."/>
            <person name="King L.M."/>
            <person name="Leal B."/>
            <person name="Lebow H."/>
            <person name="Lee S."/>
            <person name="LeVan J.M."/>
            <person name="Lewis L.C."/>
            <person name="London P."/>
            <person name="Lorensuhewa L.M."/>
            <person name="Loulseged H."/>
            <person name="Lovett D.A."/>
            <person name="Lucier A."/>
            <person name="Lucier R.L."/>
            <person name="Ma J."/>
            <person name="Madu R.C."/>
            <person name="Mapua P."/>
            <person name="Martindale A.D."/>
            <person name="Martinez E."/>
            <person name="Massey E."/>
            <person name="Mawhiney S."/>
            <person name="Meador M.G."/>
            <person name="Mendez S."/>
            <person name="Mercado C."/>
            <person name="Mercado I.C."/>
            <person name="Merritt C.E."/>
            <person name="Miner Z.L."/>
            <person name="Minja E."/>
            <person name="Mitchell T."/>
            <person name="Mohabbat F."/>
            <person name="Mohabbat K."/>
            <person name="Montgomery B."/>
            <person name="Moore N."/>
            <person name="Morris S."/>
            <person name="Munidasa M."/>
            <person name="Ngo R.N."/>
            <person name="Nguyen N.B."/>
            <person name="Nickerson E."/>
            <person name="Nwaokelemeh O.O."/>
            <person name="Nwokenkwo S."/>
            <person name="Obregon M."/>
            <person name="Oguh M."/>
            <person name="Oragunye N."/>
            <person name="Oviedo R.J."/>
            <person name="Parish B.J."/>
            <person name="Parker D.N."/>
            <person name="Parrish J."/>
            <person name="Parks K.L."/>
            <person name="Paul H.A."/>
            <person name="Payton B.A."/>
            <person name="Perez A."/>
            <person name="Perrin W."/>
            <person name="Pickens A."/>
            <person name="Primus E.L."/>
            <person name="Pu L.-L."/>
            <person name="Puazo M."/>
            <person name="Quiles M.M."/>
            <person name="Quiroz J.B."/>
            <person name="Rabata D."/>
            <person name="Reeves K."/>
            <person name="Ruiz S.J."/>
            <person name="Shao H."/>
            <person name="Sisson I."/>
            <person name="Sonaike T."/>
            <person name="Sorelle R.P."/>
            <person name="Sutton A.E."/>
            <person name="Svatek A.F."/>
            <person name="Svetz L.A."/>
            <person name="Tamerisa K.S."/>
            <person name="Taylor T.R."/>
            <person name="Teague B."/>
            <person name="Thomas N."/>
            <person name="Thorn R.D."/>
            <person name="Trejos Z.Y."/>
            <person name="Trevino B.K."/>
            <person name="Ukegbu O.N."/>
            <person name="Urban J.B."/>
            <person name="Vasquez L.I."/>
            <person name="Vera V.A."/>
            <person name="Villasana D.M."/>
            <person name="Wang L."/>
            <person name="Ward-Moore S."/>
            <person name="Warren J.T."/>
            <person name="Wei X."/>
            <person name="White F."/>
            <person name="Williamson A.L."/>
            <person name="Wleczyk R."/>
            <person name="Wooden H.S."/>
            <person name="Wooden S.H."/>
            <person name="Yen J."/>
            <person name="Yoon L."/>
            <person name="Yoon V."/>
            <person name="Zorrilla S.E."/>
            <person name="Nelson D."/>
            <person name="Kucherlapati R."/>
            <person name="Weinstock G."/>
            <person name="Gibbs R.A."/>
        </authorList>
    </citation>
    <scope>NUCLEOTIDE SEQUENCE [LARGE SCALE GENOMIC DNA]</scope>
</reference>
<reference key="2">
    <citation type="submission" date="2006-10" db="EMBL/GenBank/DDBJ databases">
        <title>Exhaustive RT-PCR and sequencing of all novel TWINSCAN predictions in human.</title>
        <authorList>
            <person name="Stevens M."/>
            <person name="Wei C."/>
            <person name="Gross S.S."/>
            <person name="McPherson J."/>
            <person name="Brent M.R."/>
        </authorList>
    </citation>
    <scope>NUCLEOTIDE SEQUENCE [LARGE SCALE MRNA] OF 9-103</scope>
</reference>
<name>CFA73_HUMAN</name>
<evidence type="ECO:0000250" key="1">
    <source>
        <dbReference type="UniProtKB" id="M1V4Y8"/>
    </source>
</evidence>
<evidence type="ECO:0000255" key="2"/>
<evidence type="ECO:0000305" key="3"/>
<evidence type="ECO:0000312" key="4">
    <source>
        <dbReference type="HGNC" id="HGNC:37100"/>
    </source>
</evidence>
<comment type="function">
    <text evidence="1">May play a role in ciliary/flagellar motility by regulating the assembly and the activity of axonemal inner dynein arm.</text>
</comment>
<comment type="subcellular location">
    <subcellularLocation>
        <location evidence="1">Cytoplasm</location>
        <location evidence="1">Cytoskeleton</location>
        <location evidence="1">Cilium axoneme</location>
    </subcellularLocation>
</comment>
<comment type="similarity">
    <text evidence="3">Belongs to the CFAP73 family.</text>
</comment>
<accession>A6NFT4</accession>
<gene>
    <name evidence="4" type="primary">CFAP73</name>
    <name evidence="4" type="synonym">CCDC42B</name>
</gene>
<organism>
    <name type="scientific">Homo sapiens</name>
    <name type="common">Human</name>
    <dbReference type="NCBI Taxonomy" id="9606"/>
    <lineage>
        <taxon>Eukaryota</taxon>
        <taxon>Metazoa</taxon>
        <taxon>Chordata</taxon>
        <taxon>Craniata</taxon>
        <taxon>Vertebrata</taxon>
        <taxon>Euteleostomi</taxon>
        <taxon>Mammalia</taxon>
        <taxon>Eutheria</taxon>
        <taxon>Euarchontoglires</taxon>
        <taxon>Primates</taxon>
        <taxon>Haplorrhini</taxon>
        <taxon>Catarrhini</taxon>
        <taxon>Hominidae</taxon>
        <taxon>Homo</taxon>
    </lineage>
</organism>
<proteinExistence type="evidence at protein level"/>
<sequence length="308" mass="35914">MAVPWEEYFRLALQEKLSTKLPEQAEDHVPPVLRLLEKRQELVDADQALQAQKEVFRTKTAALKQRWEQLEQKERELKGSFIRFDKFLQDSEARRNRALRRAAEERHQAGRREVEALRLWTQLQELRREHARLQRRLKRLEPCARLLEQALELLPGFQEVPELVARFDGLAETQAALRLREREQLAELEAARARLQQLRDAWPDEVLAQGQRRAQLQERLEAARERTLQWESKWIQIQNTAAEKTLLLGRSRMAVLNLFQLVCQHQGQPPTLDIEDTEGQLEHVKLFMQDLSAMLAGLGQAEPAAPAS</sequence>